<feature type="initiator methionine" description="Removed" evidence="6">
    <location>
        <position position="1"/>
    </location>
</feature>
<feature type="chain" id="PRO_0000057747" description="Protein phosphatase 1B">
    <location>
        <begin position="2"/>
        <end position="390"/>
    </location>
</feature>
<feature type="domain" description="PPM-type phosphatase" evidence="3">
    <location>
        <begin position="23"/>
        <end position="295"/>
    </location>
</feature>
<feature type="region of interest" description="Disordered" evidence="4">
    <location>
        <begin position="1"/>
        <end position="20"/>
    </location>
</feature>
<feature type="region of interest" description="Disordered" evidence="4">
    <location>
        <begin position="371"/>
        <end position="390"/>
    </location>
</feature>
<feature type="compositionally biased region" description="Basic and acidic residues" evidence="4">
    <location>
        <begin position="1"/>
        <end position="14"/>
    </location>
</feature>
<feature type="binding site" evidence="1">
    <location>
        <position position="60"/>
    </location>
    <ligand>
        <name>Mn(2+)</name>
        <dbReference type="ChEBI" id="CHEBI:29035"/>
        <label>1</label>
    </ligand>
</feature>
<feature type="binding site" evidence="2">
    <location>
        <position position="60"/>
    </location>
    <ligand>
        <name>Mn(2+)</name>
        <dbReference type="ChEBI" id="CHEBI:29035"/>
        <label>2</label>
    </ligand>
</feature>
<feature type="binding site" evidence="1">
    <location>
        <position position="61"/>
    </location>
    <ligand>
        <name>Mn(2+)</name>
        <dbReference type="ChEBI" id="CHEBI:29035"/>
        <label>1</label>
    </ligand>
</feature>
<feature type="binding site" evidence="2">
    <location>
        <position position="243"/>
    </location>
    <ligand>
        <name>Mn(2+)</name>
        <dbReference type="ChEBI" id="CHEBI:29035"/>
        <label>2</label>
    </ligand>
</feature>
<feature type="binding site" evidence="2">
    <location>
        <position position="286"/>
    </location>
    <ligand>
        <name>Mn(2+)</name>
        <dbReference type="ChEBI" id="CHEBI:29035"/>
        <label>2</label>
    </ligand>
</feature>
<feature type="modified residue" description="Phosphoserine" evidence="2">
    <location>
        <position position="386"/>
    </location>
</feature>
<feature type="lipid moiety-binding region" description="N-myristoyl glycine" evidence="6">
    <location>
        <position position="2"/>
    </location>
</feature>
<feature type="cross-link" description="Glycyl lysine isopeptide (Lys-Gly) (interchain with G-Cter in ISG15)" evidence="1">
    <location>
        <position position="12"/>
    </location>
</feature>
<feature type="splice variant" id="VSP_005090" description="In isoform 2." evidence="9">
    <original>GAGDLEDSLVAL</original>
    <variation>FYQPSIAYSDNVFLL</variation>
    <location>
        <begin position="379"/>
        <end position="390"/>
    </location>
</feature>
<feature type="splice variant" id="VSP_005091" description="In isoform 3." evidence="9">
    <original>GAGDLEDSLVAL</original>
    <variation>MADLSTSICKPS</variation>
    <location>
        <begin position="379"/>
        <end position="390"/>
    </location>
</feature>
<feature type="splice variant" id="VSP_005092" description="In isoform 4." evidence="9">
    <original>VAL</original>
    <variation>FYQPSIAYSDNVFLL</variation>
    <location>
        <begin position="388"/>
        <end position="390"/>
    </location>
</feature>
<name>PPM1B_MOUSE</name>
<proteinExistence type="evidence at protein level"/>
<protein>
    <recommendedName>
        <fullName>Protein phosphatase 1B</fullName>
        <ecNumber>3.1.3.16</ecNumber>
    </recommendedName>
    <alternativeName>
        <fullName>Protein phosphatase 2C isoform beta</fullName>
        <shortName>PP2C-beta</shortName>
    </alternativeName>
</protein>
<keyword id="KW-0025">Alternative splicing</keyword>
<keyword id="KW-0963">Cytoplasm</keyword>
<keyword id="KW-0378">Hydrolase</keyword>
<keyword id="KW-1017">Isopeptide bond</keyword>
<keyword id="KW-0449">Lipoprotein</keyword>
<keyword id="KW-0460">Magnesium</keyword>
<keyword id="KW-0464">Manganese</keyword>
<keyword id="KW-0472">Membrane</keyword>
<keyword id="KW-0479">Metal-binding</keyword>
<keyword id="KW-0519">Myristate</keyword>
<keyword id="KW-0597">Phosphoprotein</keyword>
<keyword id="KW-0904">Protein phosphatase</keyword>
<keyword id="KW-1185">Reference proteome</keyword>
<keyword id="KW-0832">Ubl conjugation</keyword>
<dbReference type="EC" id="3.1.3.16"/>
<dbReference type="EMBL" id="D17411">
    <property type="protein sequence ID" value="BAA04233.1"/>
    <property type="molecule type" value="mRNA"/>
</dbReference>
<dbReference type="EMBL" id="D17412">
    <property type="protein sequence ID" value="BAA04234.1"/>
    <property type="status" value="ALT_SEQ"/>
    <property type="molecule type" value="mRNA"/>
</dbReference>
<dbReference type="EMBL" id="D45859">
    <property type="protein sequence ID" value="BAA08293.1"/>
    <property type="molecule type" value="mRNA"/>
</dbReference>
<dbReference type="EMBL" id="D45860">
    <property type="protein sequence ID" value="BAA08294.1"/>
    <property type="molecule type" value="mRNA"/>
</dbReference>
<dbReference type="EMBL" id="D45861">
    <property type="protein sequence ID" value="BAA08295.1"/>
    <property type="molecule type" value="mRNA"/>
</dbReference>
<dbReference type="EMBL" id="U09218">
    <property type="protein sequence ID" value="AAB60442.1"/>
    <property type="molecule type" value="mRNA"/>
</dbReference>
<dbReference type="EMBL" id="AB007798">
    <property type="protein sequence ID" value="BAA84471.1"/>
    <property type="molecule type" value="Genomic_DNA"/>
</dbReference>
<dbReference type="CCDS" id="CCDS37710.1">
    <molecule id="P36993-1"/>
</dbReference>
<dbReference type="CCDS" id="CCDS50200.1">
    <molecule id="P36993-3"/>
</dbReference>
<dbReference type="CCDS" id="CCDS50201.1">
    <molecule id="P36993-4"/>
</dbReference>
<dbReference type="PIR" id="I49016">
    <property type="entry name" value="I49016"/>
</dbReference>
<dbReference type="PIR" id="S65672">
    <property type="entry name" value="S65672"/>
</dbReference>
<dbReference type="RefSeq" id="NP_001152969.1">
    <molecule id="P36993-4"/>
    <property type="nucleotide sequence ID" value="NM_001159497.1"/>
</dbReference>
<dbReference type="RefSeq" id="NP_001152970.1">
    <molecule id="P36993-3"/>
    <property type="nucleotide sequence ID" value="NM_001159498.3"/>
</dbReference>
<dbReference type="RefSeq" id="NP_001398501.1">
    <molecule id="P36993-4"/>
    <property type="nucleotide sequence ID" value="NM_001411572.1"/>
</dbReference>
<dbReference type="RefSeq" id="NP_001398502.1">
    <molecule id="P36993-4"/>
    <property type="nucleotide sequence ID" value="NM_001411573.1"/>
</dbReference>
<dbReference type="RefSeq" id="NP_001398503.1">
    <molecule id="P36993-4"/>
    <property type="nucleotide sequence ID" value="NM_001411574.1"/>
</dbReference>
<dbReference type="RefSeq" id="NP_001398505.1">
    <molecule id="P36993-3"/>
    <property type="nucleotide sequence ID" value="NM_001411576.1"/>
</dbReference>
<dbReference type="RefSeq" id="NP_001398506.1">
    <molecule id="P36993-3"/>
    <property type="nucleotide sequence ID" value="NM_001411577.1"/>
</dbReference>
<dbReference type="RefSeq" id="NP_001398507.1">
    <molecule id="P36993-3"/>
    <property type="nucleotide sequence ID" value="NM_001411578.1"/>
</dbReference>
<dbReference type="RefSeq" id="NP_001398509.1">
    <molecule id="P36993-1"/>
    <property type="nucleotide sequence ID" value="NM_001411580.1"/>
</dbReference>
<dbReference type="RefSeq" id="NP_035281.1">
    <molecule id="P36993-1"/>
    <property type="nucleotide sequence ID" value="NM_011151.3"/>
</dbReference>
<dbReference type="RefSeq" id="XP_006523924.1">
    <property type="nucleotide sequence ID" value="XM_006523861.3"/>
</dbReference>
<dbReference type="RefSeq" id="XP_006523925.1">
    <property type="nucleotide sequence ID" value="XM_006523862.3"/>
</dbReference>
<dbReference type="RefSeq" id="XP_011244625.1">
    <property type="nucleotide sequence ID" value="XM_011246323.1"/>
</dbReference>
<dbReference type="RefSeq" id="XP_036016306.1">
    <molecule id="P36993-3"/>
    <property type="nucleotide sequence ID" value="XM_036160413.1"/>
</dbReference>
<dbReference type="RefSeq" id="XP_036016308.1">
    <molecule id="P36993-4"/>
    <property type="nucleotide sequence ID" value="XM_036160415.1"/>
</dbReference>
<dbReference type="SMR" id="P36993"/>
<dbReference type="BioGRID" id="202333">
    <property type="interactions" value="10"/>
</dbReference>
<dbReference type="FunCoup" id="P36993">
    <property type="interactions" value="4384"/>
</dbReference>
<dbReference type="STRING" id="10090.ENSMUSP00000079107"/>
<dbReference type="GlyGen" id="P36993">
    <property type="glycosylation" value="1 site, 1 O-linked glycan (1 site)"/>
</dbReference>
<dbReference type="iPTMnet" id="P36993"/>
<dbReference type="PhosphoSitePlus" id="P36993"/>
<dbReference type="jPOST" id="P36993"/>
<dbReference type="PaxDb" id="10090-ENSMUSP00000079107"/>
<dbReference type="PeptideAtlas" id="P36993"/>
<dbReference type="ProteomicsDB" id="289810">
    <molecule id="P36993-1"/>
</dbReference>
<dbReference type="ProteomicsDB" id="289812">
    <molecule id="P36993-3"/>
</dbReference>
<dbReference type="ProteomicsDB" id="289813">
    <molecule id="P36993-4"/>
</dbReference>
<dbReference type="ProteomicsDB" id="289814">
    <molecule id="P36993-5"/>
</dbReference>
<dbReference type="Pumba" id="P36993"/>
<dbReference type="DNASU" id="19043"/>
<dbReference type="Ensembl" id="ENSMUST00000112304.10">
    <molecule id="P36993-1"/>
    <property type="protein sequence ID" value="ENSMUSP00000107923.3"/>
    <property type="gene ID" value="ENSMUSG00000061130.14"/>
</dbReference>
<dbReference type="Ensembl" id="ENSMUST00000112305.10">
    <molecule id="P36993-4"/>
    <property type="protein sequence ID" value="ENSMUSP00000107924.4"/>
    <property type="gene ID" value="ENSMUSG00000061130.14"/>
</dbReference>
<dbReference type="Ensembl" id="ENSMUST00000112307.4">
    <molecule id="P36993-3"/>
    <property type="protein sequence ID" value="ENSMUSP00000107926.4"/>
    <property type="gene ID" value="ENSMUSG00000061130.14"/>
</dbReference>
<dbReference type="Ensembl" id="ENSMUST00000234332.2">
    <molecule id="P36993-4"/>
    <property type="protein sequence ID" value="ENSMUSP00000157013.2"/>
    <property type="gene ID" value="ENSMUSG00000061130.14"/>
</dbReference>
<dbReference type="Ensembl" id="ENSMUST00000234540.2">
    <molecule id="P36993-3"/>
    <property type="protein sequence ID" value="ENSMUSP00000157282.2"/>
    <property type="gene ID" value="ENSMUSG00000061130.14"/>
</dbReference>
<dbReference type="Ensembl" id="ENSMUST00000234851.2">
    <molecule id="P36993-5"/>
    <property type="protein sequence ID" value="ENSMUSP00000157058.2"/>
    <property type="gene ID" value="ENSMUSG00000061130.14"/>
</dbReference>
<dbReference type="GeneID" id="19043"/>
<dbReference type="KEGG" id="mmu:19043"/>
<dbReference type="UCSC" id="uc008dth.2">
    <molecule id="P36993-1"/>
    <property type="organism name" value="mouse"/>
</dbReference>
<dbReference type="UCSC" id="uc008dti.2">
    <molecule id="P36993-4"/>
    <property type="organism name" value="mouse"/>
</dbReference>
<dbReference type="UCSC" id="uc008dtj.2">
    <molecule id="P36993-3"/>
    <property type="organism name" value="mouse"/>
</dbReference>
<dbReference type="UCSC" id="uc008dtk.2">
    <molecule id="P36993-5"/>
    <property type="organism name" value="mouse"/>
</dbReference>
<dbReference type="AGR" id="MGI:101841"/>
<dbReference type="CTD" id="5495"/>
<dbReference type="MGI" id="MGI:101841">
    <property type="gene designation" value="Ppm1b"/>
</dbReference>
<dbReference type="VEuPathDB" id="HostDB:ENSMUSG00000061130"/>
<dbReference type="eggNOG" id="KOG0697">
    <property type="taxonomic scope" value="Eukaryota"/>
</dbReference>
<dbReference type="GeneTree" id="ENSGT00940000156070"/>
<dbReference type="HOGENOM" id="CLU_013173_4_0_1"/>
<dbReference type="InParanoid" id="P36993"/>
<dbReference type="OMA" id="QDNRVNG"/>
<dbReference type="OrthoDB" id="10264738at2759"/>
<dbReference type="PhylomeDB" id="P36993"/>
<dbReference type="Reactome" id="R-MMU-1169408">
    <property type="pathway name" value="ISG15 antiviral mechanism"/>
</dbReference>
<dbReference type="BioGRID-ORCS" id="19043">
    <property type="hits" value="2 hits in 78 CRISPR screens"/>
</dbReference>
<dbReference type="ChiTaRS" id="Ppm1b">
    <property type="organism name" value="mouse"/>
</dbReference>
<dbReference type="PRO" id="PR:P36993"/>
<dbReference type="Proteomes" id="UP000000589">
    <property type="component" value="Chromosome 17"/>
</dbReference>
<dbReference type="RNAct" id="P36993">
    <property type="molecule type" value="protein"/>
</dbReference>
<dbReference type="Bgee" id="ENSMUSG00000061130">
    <property type="expression patterns" value="Expressed in retinal neural layer and 252 other cell types or tissues"/>
</dbReference>
<dbReference type="ExpressionAtlas" id="P36993">
    <property type="expression patterns" value="baseline and differential"/>
</dbReference>
<dbReference type="GO" id="GO:0005829">
    <property type="term" value="C:cytosol"/>
    <property type="evidence" value="ECO:0000314"/>
    <property type="project" value="UniProtKB"/>
</dbReference>
<dbReference type="GO" id="GO:0016020">
    <property type="term" value="C:membrane"/>
    <property type="evidence" value="ECO:0000314"/>
    <property type="project" value="UniProtKB"/>
</dbReference>
<dbReference type="GO" id="GO:0000287">
    <property type="term" value="F:magnesium ion binding"/>
    <property type="evidence" value="ECO:0007669"/>
    <property type="project" value="InterPro"/>
</dbReference>
<dbReference type="GO" id="GO:0030145">
    <property type="term" value="F:manganese ion binding"/>
    <property type="evidence" value="ECO:0007669"/>
    <property type="project" value="InterPro"/>
</dbReference>
<dbReference type="GO" id="GO:0004722">
    <property type="term" value="F:protein serine/threonine phosphatase activity"/>
    <property type="evidence" value="ECO:0007669"/>
    <property type="project" value="UniProtKB-EC"/>
</dbReference>
<dbReference type="GO" id="GO:0006499">
    <property type="term" value="P:N-terminal protein myristoylation"/>
    <property type="evidence" value="ECO:0000314"/>
    <property type="project" value="UniProtKB"/>
</dbReference>
<dbReference type="GO" id="GO:0043124">
    <property type="term" value="P:negative regulation of canonical NF-kappaB signal transduction"/>
    <property type="evidence" value="ECO:0000250"/>
    <property type="project" value="UniProtKB"/>
</dbReference>
<dbReference type="GO" id="GO:0050687">
    <property type="term" value="P:negative regulation of defense response to virus"/>
    <property type="evidence" value="ECO:0000250"/>
    <property type="project" value="UniProtKB"/>
</dbReference>
<dbReference type="GO" id="GO:0032688">
    <property type="term" value="P:negative regulation of interferon-beta production"/>
    <property type="evidence" value="ECO:0000250"/>
    <property type="project" value="UniProtKB"/>
</dbReference>
<dbReference type="GO" id="GO:1901223">
    <property type="term" value="P:negative regulation of non-canonical NF-kappaB signal transduction"/>
    <property type="evidence" value="ECO:0000250"/>
    <property type="project" value="UniProtKB"/>
</dbReference>
<dbReference type="GO" id="GO:0006470">
    <property type="term" value="P:protein dephosphorylation"/>
    <property type="evidence" value="ECO:0000315"/>
    <property type="project" value="UniProtKB"/>
</dbReference>
<dbReference type="CDD" id="cd00143">
    <property type="entry name" value="PP2Cc"/>
    <property type="match status" value="1"/>
</dbReference>
<dbReference type="FunFam" id="1.10.10.430:FF:000001">
    <property type="entry name" value="protein phosphatase 1B isoform X1"/>
    <property type="match status" value="1"/>
</dbReference>
<dbReference type="FunFam" id="3.60.40.10:FF:000001">
    <property type="entry name" value="protein phosphatase 1B isoform X1"/>
    <property type="match status" value="1"/>
</dbReference>
<dbReference type="Gene3D" id="1.10.10.430">
    <property type="entry name" value="Phosphatase 2C, C-terminal domain suprefamily"/>
    <property type="match status" value="1"/>
</dbReference>
<dbReference type="Gene3D" id="3.60.40.10">
    <property type="entry name" value="PPM-type phosphatase domain"/>
    <property type="match status" value="1"/>
</dbReference>
<dbReference type="InterPro" id="IPR015655">
    <property type="entry name" value="PP2C"/>
</dbReference>
<dbReference type="InterPro" id="IPR000222">
    <property type="entry name" value="PP2C_BS"/>
</dbReference>
<dbReference type="InterPro" id="IPR012911">
    <property type="entry name" value="PP2C_C"/>
</dbReference>
<dbReference type="InterPro" id="IPR036580">
    <property type="entry name" value="PP2C_C_sf"/>
</dbReference>
<dbReference type="InterPro" id="IPR036457">
    <property type="entry name" value="PPM-type-like_dom_sf"/>
</dbReference>
<dbReference type="InterPro" id="IPR001932">
    <property type="entry name" value="PPM-type_phosphatase-like_dom"/>
</dbReference>
<dbReference type="PANTHER" id="PTHR47992">
    <property type="entry name" value="PROTEIN PHOSPHATASE"/>
    <property type="match status" value="1"/>
</dbReference>
<dbReference type="Pfam" id="PF00481">
    <property type="entry name" value="PP2C"/>
    <property type="match status" value="1"/>
</dbReference>
<dbReference type="Pfam" id="PF07830">
    <property type="entry name" value="PP2C_C"/>
    <property type="match status" value="1"/>
</dbReference>
<dbReference type="SMART" id="SM00332">
    <property type="entry name" value="PP2Cc"/>
    <property type="match status" value="1"/>
</dbReference>
<dbReference type="SUPFAM" id="SSF81606">
    <property type="entry name" value="PP2C-like"/>
    <property type="match status" value="1"/>
</dbReference>
<dbReference type="SUPFAM" id="SSF81601">
    <property type="entry name" value="Protein serine/threonine phosphatase 2C, C-terminal domain"/>
    <property type="match status" value="1"/>
</dbReference>
<dbReference type="PROSITE" id="PS01032">
    <property type="entry name" value="PPM_1"/>
    <property type="match status" value="1"/>
</dbReference>
<dbReference type="PROSITE" id="PS51746">
    <property type="entry name" value="PPM_2"/>
    <property type="match status" value="1"/>
</dbReference>
<organism>
    <name type="scientific">Mus musculus</name>
    <name type="common">Mouse</name>
    <dbReference type="NCBI Taxonomy" id="10090"/>
    <lineage>
        <taxon>Eukaryota</taxon>
        <taxon>Metazoa</taxon>
        <taxon>Chordata</taxon>
        <taxon>Craniata</taxon>
        <taxon>Vertebrata</taxon>
        <taxon>Euteleostomi</taxon>
        <taxon>Mammalia</taxon>
        <taxon>Eutheria</taxon>
        <taxon>Euarchontoglires</taxon>
        <taxon>Glires</taxon>
        <taxon>Rodentia</taxon>
        <taxon>Myomorpha</taxon>
        <taxon>Muroidea</taxon>
        <taxon>Muridae</taxon>
        <taxon>Murinae</taxon>
        <taxon>Mus</taxon>
        <taxon>Mus</taxon>
    </lineage>
</organism>
<accession>P36993</accession>
<evidence type="ECO:0000250" key="1"/>
<evidence type="ECO:0000250" key="2">
    <source>
        <dbReference type="UniProtKB" id="O75688"/>
    </source>
</evidence>
<evidence type="ECO:0000255" key="3">
    <source>
        <dbReference type="PROSITE-ProRule" id="PRU01082"/>
    </source>
</evidence>
<evidence type="ECO:0000256" key="4">
    <source>
        <dbReference type="SAM" id="MobiDB-lite"/>
    </source>
</evidence>
<evidence type="ECO:0000269" key="5">
    <source>
    </source>
</evidence>
<evidence type="ECO:0000269" key="6">
    <source>
    </source>
</evidence>
<evidence type="ECO:0000303" key="7">
    <source>
    </source>
</evidence>
<evidence type="ECO:0000303" key="8">
    <source>
    </source>
</evidence>
<evidence type="ECO:0000305" key="9"/>
<comment type="function">
    <text evidence="6">Enzyme with a broad specificity. Dephosphorylates PRKAA1 and PRKAA2. Inhibits TBK1-mediated antiviral signaling by dephosphorylating it at 'Ser-172'. Plays an important role in the termination of TNF-alpha-mediated NF-kappa-B activation through dephosphorylating and inactivating IKBKB/IKKB.</text>
</comment>
<comment type="catalytic activity">
    <reaction>
        <text>O-phospho-L-seryl-[protein] + H2O = L-seryl-[protein] + phosphate</text>
        <dbReference type="Rhea" id="RHEA:20629"/>
        <dbReference type="Rhea" id="RHEA-COMP:9863"/>
        <dbReference type="Rhea" id="RHEA-COMP:11604"/>
        <dbReference type="ChEBI" id="CHEBI:15377"/>
        <dbReference type="ChEBI" id="CHEBI:29999"/>
        <dbReference type="ChEBI" id="CHEBI:43474"/>
        <dbReference type="ChEBI" id="CHEBI:83421"/>
        <dbReference type="EC" id="3.1.3.16"/>
    </reaction>
</comment>
<comment type="catalytic activity">
    <reaction>
        <text>O-phospho-L-threonyl-[protein] + H2O = L-threonyl-[protein] + phosphate</text>
        <dbReference type="Rhea" id="RHEA:47004"/>
        <dbReference type="Rhea" id="RHEA-COMP:11060"/>
        <dbReference type="Rhea" id="RHEA-COMP:11605"/>
        <dbReference type="ChEBI" id="CHEBI:15377"/>
        <dbReference type="ChEBI" id="CHEBI:30013"/>
        <dbReference type="ChEBI" id="CHEBI:43474"/>
        <dbReference type="ChEBI" id="CHEBI:61977"/>
        <dbReference type="EC" id="3.1.3.16"/>
    </reaction>
</comment>
<comment type="cofactor">
    <cofactor evidence="1">
        <name>Mg(2+)</name>
        <dbReference type="ChEBI" id="CHEBI:18420"/>
    </cofactor>
    <cofactor evidence="1">
        <name>Mn(2+)</name>
        <dbReference type="ChEBI" id="CHEBI:29035"/>
    </cofactor>
    <text evidence="1">Binds 2 magnesium or manganese ions per subunit.</text>
</comment>
<comment type="subunit">
    <text evidence="1">Monomer. Interacts with PAK6 (By similarity). Interacts with the phosphorylated form of IKBKB/IKKB (By similarity).</text>
</comment>
<comment type="subcellular location">
    <subcellularLocation>
        <location evidence="5 6">Cytoplasm</location>
        <location evidence="5 6">Cytosol</location>
    </subcellularLocation>
    <subcellularLocation>
        <location evidence="6">Membrane</location>
        <topology evidence="6">Lipid-anchor</topology>
    </subcellularLocation>
    <text evidence="6">Weakly associates at the membrane and N-myristoylation mediates the membrane localization.</text>
</comment>
<comment type="alternative products">
    <event type="alternative splicing"/>
    <isoform>
        <id>P36993-1</id>
        <name>1</name>
        <name evidence="8">Beta-1</name>
        <sequence type="displayed"/>
    </isoform>
    <isoform>
        <id>P36993-3</id>
        <name>2</name>
        <name evidence="7">Beta-3</name>
        <sequence type="described" ref="VSP_005090"/>
    </isoform>
    <isoform>
        <id>P36993-4</id>
        <name>3</name>
        <name evidence="7">Beta-4</name>
        <sequence type="described" ref="VSP_005091"/>
    </isoform>
    <isoform>
        <id>P36993-5</id>
        <name>4</name>
        <name evidence="7">Beta-5</name>
        <sequence type="described" ref="VSP_005092"/>
    </isoform>
</comment>
<comment type="tissue specificity">
    <text>Isoform 1: Expressed ubiquitously. Isoform 2: Expressed exclusively in testis and intestine. Isoform 3: Expressed exclusively in brain and intestine. Isoform 4: Expressed exclusively in testis and intestine.</text>
</comment>
<comment type="PTM">
    <text evidence="1">Isgylation negatively regulates its activity.</text>
</comment>
<comment type="PTM">
    <text evidence="6">N-myristoylation is essential for the recognition of its substrates for dephosphorylation.</text>
</comment>
<comment type="similarity">
    <text evidence="9">Belongs to the PP2C family.</text>
</comment>
<comment type="sequence caution" evidence="9">
    <conflict type="miscellaneous discrepancy">
        <sequence resource="EMBL-CDS" id="BAA04234"/>
    </conflict>
    <text>Probable cloning artifact.</text>
</comment>
<reference key="1">
    <citation type="journal article" date="1993" name="Arch. Biochem. Biophys.">
        <title>Molecular cloning of a novel isotype of Mg(2+)-dependent protein phosphatase beta (type 2C beta) enriched in brain and heart.</title>
        <authorList>
            <person name="Terasawa T."/>
            <person name="Kobayashi T."/>
            <person name="Murakami T."/>
            <person name="Ohnishi M."/>
            <person name="Kato S."/>
            <person name="Tanaka O."/>
            <person name="Kondo H."/>
            <person name="Yamamoto H."/>
            <person name="Takeuchi T."/>
            <person name="Tamura S."/>
        </authorList>
    </citation>
    <scope>NUCLEOTIDE SEQUENCE [MRNA] (ISOFORM 1)</scope>
    <scope>TISSUE SPECIFICITY</scope>
</reference>
<reference key="2">
    <citation type="journal article" date="1995" name="Arch. Biochem. Biophys.">
        <title>Molecular cloning and expression of mouse Mg(2+)-dependent protein phosphatase beta-4 (type 2C beta-4).</title>
        <authorList>
            <person name="Kato S."/>
            <person name="Terasawa T."/>
            <person name="Kobayashi T."/>
            <person name="Ohnishi M."/>
            <person name="Sasahara Y."/>
            <person name="Kusuda K."/>
            <person name="Yanagawa Y."/>
            <person name="Hiraga A."/>
            <person name="Matsui Y."/>
            <person name="Tamura S."/>
        </authorList>
    </citation>
    <scope>NUCLEOTIDE SEQUENCE [MRNA] (ISOFORMS 2; 3 AND 4)</scope>
    <source>
        <tissue>Testis</tissue>
    </source>
</reference>
<reference key="3">
    <citation type="journal article" date="1994" name="Biochem. Mol. Biol. Int.">
        <title>Molecular cloning and expression of cDNAs encoding two isoforms of protein phosphatase 2C beta from mouse testis.</title>
        <authorList>
            <person name="Hou E.W."/>
            <person name="Kawai Y."/>
            <person name="Miyasaka H."/>
            <person name="Li S.S."/>
        </authorList>
    </citation>
    <scope>NUCLEOTIDE SEQUENCE [MRNA] (ISOFORMS 2 AND 3)</scope>
    <source>
        <tissue>Testis</tissue>
    </source>
</reference>
<reference key="4">
    <citation type="journal article" date="1999" name="Eur. J. Biochem.">
        <title>Alternative promoters direct tissue-specific expression of the mouse protein phosphatase 2Cbeta gene.</title>
        <authorList>
            <person name="Ohnishi M."/>
            <person name="Chida N."/>
            <person name="Kobayashi T."/>
            <person name="Wang H."/>
            <person name="Ikeda S."/>
            <person name="Hanada M."/>
            <person name="Yanagawa Y."/>
            <person name="Katsura K."/>
            <person name="Hiraga A."/>
            <person name="Tamura S."/>
        </authorList>
    </citation>
    <scope>NUCLEOTIDE SEQUENCE [GENOMIC DNA]</scope>
    <source>
        <strain>129/Sv</strain>
    </source>
</reference>
<reference key="5">
    <citation type="journal article" date="2010" name="Cell">
        <title>A tissue-specific atlas of mouse protein phosphorylation and expression.</title>
        <authorList>
            <person name="Huttlin E.L."/>
            <person name="Jedrychowski M.P."/>
            <person name="Elias J.E."/>
            <person name="Goswami T."/>
            <person name="Rad R."/>
            <person name="Beausoleil S.A."/>
            <person name="Villen J."/>
            <person name="Haas W."/>
            <person name="Sowa M.E."/>
            <person name="Gygi S.P."/>
        </authorList>
    </citation>
    <scope>IDENTIFICATION BY MASS SPECTROMETRY [LARGE SCALE ANALYSIS]</scope>
    <source>
        <tissue>Brain</tissue>
        <tissue>Brown adipose tissue</tissue>
        <tissue>Heart</tissue>
        <tissue>Kidney</tissue>
        <tissue>Liver</tissue>
        <tissue>Lung</tissue>
        <tissue>Pancreas</tissue>
        <tissue>Spleen</tissue>
        <tissue>Testis</tissue>
    </source>
</reference>
<reference key="6">
    <citation type="journal article" date="2012" name="Cell. Signal.">
        <title>Protein phosphatase 5 modulates SMAD3 function in the transforming growth factor-beta pathway.</title>
        <authorList>
            <person name="Bruce D.L."/>
            <person name="Macartney T."/>
            <person name="Yong W."/>
            <person name="Shou W."/>
            <person name="Sapkota G.P."/>
        </authorList>
    </citation>
    <scope>SUBCELLULAR LOCATION</scope>
</reference>
<reference key="7">
    <citation type="journal article" date="2013" name="Biochem. J.">
        <title>N-Myristoylation is essential for protein phosphatases PPM1A and PPM1B to dephosphorylate their physiological substrates in cells.</title>
        <authorList>
            <person name="Chida T."/>
            <person name="Ando M."/>
            <person name="Matsuki T."/>
            <person name="Masu Y."/>
            <person name="Nagaura Y."/>
            <person name="Takano-Yamamoto T."/>
            <person name="Tamura S."/>
            <person name="Kobayashi T."/>
        </authorList>
    </citation>
    <scope>FUNCTION</scope>
    <scope>SUBCELLULAR LOCATION</scope>
    <scope>MYRISTOYLATION AT GLY-2</scope>
</reference>
<gene>
    <name type="primary">Ppm1b</name>
    <name type="synonym">Pp2c2</name>
    <name type="synonym">Pppm1b</name>
</gene>
<sequence length="390" mass="42795">MGAFLDKPKTEKHNAHGAGNGLRYGLSSMQGWRVEMEDAHTAVVGIPHGLDNWSFFAVYDGHAGSRVANYCSTHLLEHITTNEDFRAADKSGSALEPSVESVKTGIRTGFLKIDEYMRNFSDLRNGMDRSGSTAVGVMVSPTHMYFINCGDSRAVLCRNGQVCFSTQDHKPCNPVEKERIQNAGGSVMIQRVNGSLAVSRALGDYDYKCVDGKGPTEQLVSPEPEVYEIVRAEEDEFVVLACDGIWDVMSNEELCEFVKSRLEVSDDLENVCNWVVDTCLHKGSRDNMSVVLVCFSNAPKVSEEAVKRDSELDKHLESRVEEIMQKSGEEGMPDLAHVMRILSAENIPNLPPGGGLAGKRHVIEAVYSRLNPHKDNDGGAGDLEDSLVAL</sequence>